<feature type="chain" id="PRO_0000132347" description="Small ribosomal subunit protein uS4">
    <location>
        <begin position="1"/>
        <end position="208"/>
    </location>
</feature>
<feature type="domain" description="S4 RNA-binding" evidence="1">
    <location>
        <begin position="95"/>
        <end position="157"/>
    </location>
</feature>
<evidence type="ECO:0000255" key="1">
    <source>
        <dbReference type="HAMAP-Rule" id="MF_01306"/>
    </source>
</evidence>
<evidence type="ECO:0000305" key="2"/>
<dbReference type="EMBL" id="CP000013">
    <property type="protein sequence ID" value="AAU07464.1"/>
    <property type="molecule type" value="Genomic_DNA"/>
</dbReference>
<dbReference type="RefSeq" id="WP_011193922.1">
    <property type="nucleotide sequence ID" value="NZ_CP028872.1"/>
</dbReference>
<dbReference type="SMR" id="Q660Q7"/>
<dbReference type="GeneID" id="45161410"/>
<dbReference type="KEGG" id="bga:BG0632"/>
<dbReference type="eggNOG" id="COG0522">
    <property type="taxonomic scope" value="Bacteria"/>
</dbReference>
<dbReference type="HOGENOM" id="CLU_092403_0_4_12"/>
<dbReference type="OrthoDB" id="9803672at2"/>
<dbReference type="Proteomes" id="UP000002276">
    <property type="component" value="Chromosome"/>
</dbReference>
<dbReference type="GO" id="GO:0015935">
    <property type="term" value="C:small ribosomal subunit"/>
    <property type="evidence" value="ECO:0007669"/>
    <property type="project" value="InterPro"/>
</dbReference>
<dbReference type="GO" id="GO:0019843">
    <property type="term" value="F:rRNA binding"/>
    <property type="evidence" value="ECO:0007669"/>
    <property type="project" value="UniProtKB-UniRule"/>
</dbReference>
<dbReference type="GO" id="GO:0003735">
    <property type="term" value="F:structural constituent of ribosome"/>
    <property type="evidence" value="ECO:0007669"/>
    <property type="project" value="InterPro"/>
</dbReference>
<dbReference type="GO" id="GO:0042274">
    <property type="term" value="P:ribosomal small subunit biogenesis"/>
    <property type="evidence" value="ECO:0007669"/>
    <property type="project" value="TreeGrafter"/>
</dbReference>
<dbReference type="GO" id="GO:0006412">
    <property type="term" value="P:translation"/>
    <property type="evidence" value="ECO:0007669"/>
    <property type="project" value="UniProtKB-UniRule"/>
</dbReference>
<dbReference type="CDD" id="cd00165">
    <property type="entry name" value="S4"/>
    <property type="match status" value="1"/>
</dbReference>
<dbReference type="FunFam" id="3.10.290.10:FF:000001">
    <property type="entry name" value="30S ribosomal protein S4"/>
    <property type="match status" value="1"/>
</dbReference>
<dbReference type="Gene3D" id="1.10.1050.10">
    <property type="entry name" value="Ribosomal Protein S4 Delta 41, Chain A, domain 1"/>
    <property type="match status" value="1"/>
</dbReference>
<dbReference type="Gene3D" id="3.10.290.10">
    <property type="entry name" value="RNA-binding S4 domain"/>
    <property type="match status" value="1"/>
</dbReference>
<dbReference type="HAMAP" id="MF_01306_B">
    <property type="entry name" value="Ribosomal_uS4_B"/>
    <property type="match status" value="1"/>
</dbReference>
<dbReference type="InterPro" id="IPR022801">
    <property type="entry name" value="Ribosomal_uS4"/>
</dbReference>
<dbReference type="InterPro" id="IPR005709">
    <property type="entry name" value="Ribosomal_uS4_bac-type"/>
</dbReference>
<dbReference type="InterPro" id="IPR018079">
    <property type="entry name" value="Ribosomal_uS4_CS"/>
</dbReference>
<dbReference type="InterPro" id="IPR001912">
    <property type="entry name" value="Ribosomal_uS4_N"/>
</dbReference>
<dbReference type="InterPro" id="IPR002942">
    <property type="entry name" value="S4_RNA-bd"/>
</dbReference>
<dbReference type="InterPro" id="IPR036986">
    <property type="entry name" value="S4_RNA-bd_sf"/>
</dbReference>
<dbReference type="NCBIfam" id="NF003717">
    <property type="entry name" value="PRK05327.1"/>
    <property type="match status" value="1"/>
</dbReference>
<dbReference type="NCBIfam" id="TIGR01017">
    <property type="entry name" value="rpsD_bact"/>
    <property type="match status" value="1"/>
</dbReference>
<dbReference type="PANTHER" id="PTHR11831">
    <property type="entry name" value="30S 40S RIBOSOMAL PROTEIN"/>
    <property type="match status" value="1"/>
</dbReference>
<dbReference type="PANTHER" id="PTHR11831:SF4">
    <property type="entry name" value="SMALL RIBOSOMAL SUBUNIT PROTEIN US4M"/>
    <property type="match status" value="1"/>
</dbReference>
<dbReference type="Pfam" id="PF00163">
    <property type="entry name" value="Ribosomal_S4"/>
    <property type="match status" value="1"/>
</dbReference>
<dbReference type="Pfam" id="PF01479">
    <property type="entry name" value="S4"/>
    <property type="match status" value="1"/>
</dbReference>
<dbReference type="SMART" id="SM01390">
    <property type="entry name" value="Ribosomal_S4"/>
    <property type="match status" value="1"/>
</dbReference>
<dbReference type="SMART" id="SM00363">
    <property type="entry name" value="S4"/>
    <property type="match status" value="1"/>
</dbReference>
<dbReference type="SUPFAM" id="SSF55174">
    <property type="entry name" value="Alpha-L RNA-binding motif"/>
    <property type="match status" value="1"/>
</dbReference>
<dbReference type="PROSITE" id="PS00632">
    <property type="entry name" value="RIBOSOMAL_S4"/>
    <property type="match status" value="1"/>
</dbReference>
<dbReference type="PROSITE" id="PS50889">
    <property type="entry name" value="S4"/>
    <property type="match status" value="1"/>
</dbReference>
<sequence length="208" mass="23967">MNRKQIAKGKLVRRFGINIFEQPKYDKILKKKPHPPGMHGKARKAKITEYGKQLIEKQKIKFTYGVSERQLTNTFKEAKKHHGVTGDNLLSILERRIDNIVYRAGFAISRAHARQIVSHGIIILNGRRVTIPSIILRANDQIQIKEKDSLKKLIRSNIEKTSSLRNLPTWIEVNADDLNIKVKHAPSRDEIPTLANEQMVVEYYSKRA</sequence>
<name>RS4_BORGP</name>
<proteinExistence type="inferred from homology"/>
<protein>
    <recommendedName>
        <fullName evidence="1">Small ribosomal subunit protein uS4</fullName>
    </recommendedName>
    <alternativeName>
        <fullName evidence="2">30S ribosomal protein S4</fullName>
    </alternativeName>
</protein>
<organism>
    <name type="scientific">Borrelia garinii subsp. bavariensis (strain ATCC BAA-2496 / DSM 23469 / PBi)</name>
    <name type="common">Borreliella bavariensis</name>
    <dbReference type="NCBI Taxonomy" id="290434"/>
    <lineage>
        <taxon>Bacteria</taxon>
        <taxon>Pseudomonadati</taxon>
        <taxon>Spirochaetota</taxon>
        <taxon>Spirochaetia</taxon>
        <taxon>Spirochaetales</taxon>
        <taxon>Borreliaceae</taxon>
        <taxon>Borreliella</taxon>
    </lineage>
</organism>
<accession>Q660Q7</accession>
<reference key="1">
    <citation type="journal article" date="2004" name="Nucleic Acids Res.">
        <title>Comparative analysis of the Borrelia garinii genome.</title>
        <authorList>
            <person name="Gloeckner G."/>
            <person name="Lehmann R."/>
            <person name="Romualdi A."/>
            <person name="Pradella S."/>
            <person name="Schulte-Spechtel U."/>
            <person name="Schilhabel M."/>
            <person name="Wilske B."/>
            <person name="Suehnel J."/>
            <person name="Platzer M."/>
        </authorList>
    </citation>
    <scope>NUCLEOTIDE SEQUENCE [LARGE SCALE GENOMIC DNA]</scope>
    <source>
        <strain>ATCC BAA-2496 / DSM 23469 / PBi</strain>
    </source>
</reference>
<comment type="function">
    <text evidence="1">One of the primary rRNA binding proteins, it binds directly to 16S rRNA where it nucleates assembly of the body of the 30S subunit.</text>
</comment>
<comment type="function">
    <text evidence="1">With S5 and S12 plays an important role in translational accuracy.</text>
</comment>
<comment type="subunit">
    <text evidence="1">Part of the 30S ribosomal subunit. Contacts protein S5. The interaction surface between S4 and S5 is involved in control of translational fidelity.</text>
</comment>
<comment type="similarity">
    <text evidence="1">Belongs to the universal ribosomal protein uS4 family.</text>
</comment>
<gene>
    <name evidence="1" type="primary">rpsD</name>
    <name type="ordered locus">BG0632</name>
</gene>
<keyword id="KW-0687">Ribonucleoprotein</keyword>
<keyword id="KW-0689">Ribosomal protein</keyword>
<keyword id="KW-0694">RNA-binding</keyword>
<keyword id="KW-0699">rRNA-binding</keyword>